<organismHost>
    <name type="scientific">Bos taurus</name>
    <name type="common">Bovine</name>
    <dbReference type="NCBI Taxonomy" id="9913"/>
</organismHost>
<accession>P18383</accession>
<proteinExistence type="predicted"/>
<sequence>MDFCKIDVVVSFAHSFDNLINFINTIVPYSDIIELHQFLVQSSTTGNIFVKHYNMISPRNIFIY</sequence>
<protein>
    <recommendedName>
        <fullName>Uncharacterized 7.5 kDa protein</fullName>
    </recommendedName>
</protein>
<reference key="1">
    <citation type="journal article" date="1988" name="J. Gen. Virol.">
        <title>Non-essential genes in the vaccinia virus HindIII K fragment: a gene related to serine protease inhibitors and a gene related to the 37K vaccinia virus major envelope antigen.</title>
        <authorList>
            <person name="Boursnell M.E.G."/>
            <person name="Foulds I.J."/>
            <person name="Campbell J.I."/>
            <person name="Binns M.M."/>
        </authorList>
    </citation>
    <scope>NUCLEOTIDE SEQUENCE [GENOMIC DNA]</scope>
</reference>
<organism>
    <name type="scientific">Vaccinia virus (strain Western Reserve)</name>
    <name type="common">VACV</name>
    <name type="synonym">Vaccinia virus (strain WR)</name>
    <dbReference type="NCBI Taxonomy" id="10254"/>
    <lineage>
        <taxon>Viruses</taxon>
        <taxon>Varidnaviria</taxon>
        <taxon>Bamfordvirae</taxon>
        <taxon>Nucleocytoviricota</taxon>
        <taxon>Pokkesviricetes</taxon>
        <taxon>Chitovirales</taxon>
        <taxon>Poxviridae</taxon>
        <taxon>Chordopoxvirinae</taxon>
        <taxon>Orthopoxvirus</taxon>
        <taxon>Vaccinia virus</taxon>
    </lineage>
</organism>
<feature type="chain" id="PRO_0000099746" description="Uncharacterized 7.5 kDa protein">
    <location>
        <begin position="1"/>
        <end position="64"/>
    </location>
</feature>
<name>Y7K5_VACCW</name>
<dbReference type="EMBL" id="D00382">
    <property type="protein sequence ID" value="BAA00294.1"/>
    <property type="molecule type" value="Genomic_DNA"/>
</dbReference>
<dbReference type="PIR" id="JS0218">
    <property type="entry name" value="WMVZK8"/>
</dbReference>
<dbReference type="SMR" id="P18383"/>